<keyword id="KW-0963">Cytoplasm</keyword>
<keyword id="KW-0967">Endosome</keyword>
<keyword id="KW-0597">Phosphoprotein</keyword>
<keyword id="KW-1185">Reference proteome</keyword>
<keyword id="KW-0727">SH2 domain</keyword>
<keyword id="KW-0728">SH3 domain</keyword>
<feature type="chain" id="PRO_0000071948" description="Src-like-adapter">
    <location>
        <begin position="1"/>
        <end position="312"/>
    </location>
</feature>
<feature type="domain" description="SH3" evidence="3">
    <location>
        <begin position="38"/>
        <end position="98"/>
    </location>
</feature>
<feature type="domain" description="SH2" evidence="2">
    <location>
        <begin position="100"/>
        <end position="191"/>
    </location>
</feature>
<feature type="region of interest" description="Disordered" evidence="4">
    <location>
        <begin position="1"/>
        <end position="33"/>
    </location>
</feature>
<feature type="region of interest" description="SLA C-terminal">
    <location>
        <begin position="206"/>
        <end position="312"/>
    </location>
</feature>
<feature type="modified residue" description="Phosphoserine" evidence="5">
    <location>
        <position position="274"/>
    </location>
</feature>
<accession>P59622</accession>
<reference key="1">
    <citation type="submission" date="2003-01" db="EMBL/GenBank/DDBJ databases">
        <authorList>
            <person name="Alifragis P."/>
            <person name="Molnar Z."/>
            <person name="Parnavelas J."/>
        </authorList>
    </citation>
    <scope>NUCLEOTIDE SEQUENCE [MRNA]</scope>
</reference>
<reference key="2">
    <citation type="journal article" date="2012" name="Nat. Commun.">
        <title>Quantitative maps of protein phosphorylation sites across 14 different rat organs and tissues.</title>
        <authorList>
            <person name="Lundby A."/>
            <person name="Secher A."/>
            <person name="Lage K."/>
            <person name="Nordsborg N.B."/>
            <person name="Dmytriyev A."/>
            <person name="Lundby C."/>
            <person name="Olsen J.V."/>
        </authorList>
    </citation>
    <scope>PHOSPHORYLATION [LARGE SCALE ANALYSIS] AT SER-274</scope>
    <scope>IDENTIFICATION BY MASS SPECTROMETRY [LARGE SCALE ANALYSIS]</scope>
</reference>
<sequence length="312" mass="34745">MLCRLPGPSTSRGEKEMGNSMKSTPAPLERPLSNTEGLESDFLAVLNDYPSPDISPPIFRRGEKLRVISDEGGWWKAISLSTGRESYIPGICVARVYHGWLFEGLGRDKAEELLQLPDTKIGSFMIRESETKKGFYSLSVRHRQVKHYRIFRLPNNWYYISPRLTFQCLEDLVTHYSEVADGLCCVLTTPCLAQNTPAPTAQPSPCTSPGSPVTLRQKTFDWKRVSSLQEGPEGAENPLRVDESLFSYGLRESIASYLSLTGDDSSNFDRKKKSLSLIYSGSKRKSSFFSAPNTLKINALAGTQKTKALTAT</sequence>
<name>SLAP1_RAT</name>
<protein>
    <recommendedName>
        <fullName>Src-like-adapter</fullName>
    </recommendedName>
    <alternativeName>
        <fullName>Src-like-adapter protein 1</fullName>
        <shortName>SLAP-1</shortName>
    </alternativeName>
</protein>
<evidence type="ECO:0000250" key="1"/>
<evidence type="ECO:0000255" key="2">
    <source>
        <dbReference type="PROSITE-ProRule" id="PRU00191"/>
    </source>
</evidence>
<evidence type="ECO:0000255" key="3">
    <source>
        <dbReference type="PROSITE-ProRule" id="PRU00192"/>
    </source>
</evidence>
<evidence type="ECO:0000256" key="4">
    <source>
        <dbReference type="SAM" id="MobiDB-lite"/>
    </source>
</evidence>
<evidence type="ECO:0007744" key="5">
    <source>
    </source>
</evidence>
<organism>
    <name type="scientific">Rattus norvegicus</name>
    <name type="common">Rat</name>
    <dbReference type="NCBI Taxonomy" id="10116"/>
    <lineage>
        <taxon>Eukaryota</taxon>
        <taxon>Metazoa</taxon>
        <taxon>Chordata</taxon>
        <taxon>Craniata</taxon>
        <taxon>Vertebrata</taxon>
        <taxon>Euteleostomi</taxon>
        <taxon>Mammalia</taxon>
        <taxon>Eutheria</taxon>
        <taxon>Euarchontoglires</taxon>
        <taxon>Glires</taxon>
        <taxon>Rodentia</taxon>
        <taxon>Myomorpha</taxon>
        <taxon>Muroidea</taxon>
        <taxon>Muridae</taxon>
        <taxon>Murinae</taxon>
        <taxon>Rattus</taxon>
    </lineage>
</organism>
<proteinExistence type="evidence at protein level"/>
<comment type="function">
    <text evidence="1">Adapter protein, which negatively regulates T-cell receptor (TCR) signaling. Inhibits T-cell antigen-receptor induced activation of nuclear factor of activated T-cells. Involved in the negative regulation of positive selection and mitosis of T-cells. May act by linking signaling proteins such as ZAP70 with CBL, leading to a CBL dependent degradation of signaling proteins (By similarity).</text>
</comment>
<comment type="subunit">
    <text evidence="1">Homodimer. Interacts with phosphorylated CBL, SYK and LAT. Homodimerization and interaction with phosphorylated CBL occurs via its C-terminal domain. Interacts with PDGFRB and EPHA2. Interacts with phosphorylated proteins ZAP70; CD3Z; VAV1 and LCP2 via its SH2 domain (By similarity).</text>
</comment>
<comment type="subcellular location">
    <subcellularLocation>
        <location evidence="1">Cytoplasm</location>
    </subcellularLocation>
    <subcellularLocation>
        <location evidence="1">Endosome</location>
    </subcellularLocation>
    <text evidence="1">Colocalizes with endosomes.</text>
</comment>
<comment type="domain">
    <text evidence="1">The C-terminal domain is essential for the homodimerization and the interaction with CBL. While the interaction with CBL is apparently mediated via the hydrophobic region of this domain, the highly charged region is apparently required for the homodimerization (By similarity).</text>
</comment>
<comment type="PTM">
    <text evidence="1">Phosphorylated.</text>
</comment>
<dbReference type="EMBL" id="AY217759">
    <property type="protein sequence ID" value="AAO61134.1"/>
    <property type="molecule type" value="mRNA"/>
</dbReference>
<dbReference type="RefSeq" id="NP_835198.1">
    <property type="nucleotide sequence ID" value="NM_178097.2"/>
</dbReference>
<dbReference type="SMR" id="P59622"/>
<dbReference type="FunCoup" id="P59622">
    <property type="interactions" value="914"/>
</dbReference>
<dbReference type="IntAct" id="P59622">
    <property type="interactions" value="2"/>
</dbReference>
<dbReference type="STRING" id="10116.ENSRNOP00000072624"/>
<dbReference type="iPTMnet" id="P59622"/>
<dbReference type="PhosphoSitePlus" id="P59622"/>
<dbReference type="PaxDb" id="10116-ENSRNOP00000007982"/>
<dbReference type="GeneID" id="338477"/>
<dbReference type="KEGG" id="rno:338477"/>
<dbReference type="UCSC" id="RGD:631373">
    <property type="organism name" value="rat"/>
</dbReference>
<dbReference type="AGR" id="RGD:631373"/>
<dbReference type="CTD" id="6503"/>
<dbReference type="RGD" id="631373">
    <property type="gene designation" value="Sla"/>
</dbReference>
<dbReference type="eggNOG" id="ENOG502QPWY">
    <property type="taxonomic scope" value="Eukaryota"/>
</dbReference>
<dbReference type="InParanoid" id="P59622"/>
<dbReference type="PhylomeDB" id="P59622"/>
<dbReference type="PRO" id="PR:P59622"/>
<dbReference type="Proteomes" id="UP000002494">
    <property type="component" value="Unplaced"/>
</dbReference>
<dbReference type="GO" id="GO:0008180">
    <property type="term" value="C:COP9 signalosome"/>
    <property type="evidence" value="ECO:0000318"/>
    <property type="project" value="GO_Central"/>
</dbReference>
<dbReference type="GO" id="GO:0005737">
    <property type="term" value="C:cytoplasm"/>
    <property type="evidence" value="ECO:0000318"/>
    <property type="project" value="GO_Central"/>
</dbReference>
<dbReference type="GO" id="GO:0005768">
    <property type="term" value="C:endosome"/>
    <property type="evidence" value="ECO:0007669"/>
    <property type="project" value="UniProtKB-SubCell"/>
</dbReference>
<dbReference type="GO" id="GO:0005654">
    <property type="term" value="C:nucleoplasm"/>
    <property type="evidence" value="ECO:0000318"/>
    <property type="project" value="GO_Central"/>
</dbReference>
<dbReference type="GO" id="GO:0005886">
    <property type="term" value="C:plasma membrane"/>
    <property type="evidence" value="ECO:0000318"/>
    <property type="project" value="GO_Central"/>
</dbReference>
<dbReference type="GO" id="GO:0005154">
    <property type="term" value="F:epidermal growth factor receptor binding"/>
    <property type="evidence" value="ECO:0000318"/>
    <property type="project" value="GO_Central"/>
</dbReference>
<dbReference type="GO" id="GO:0001784">
    <property type="term" value="F:phosphotyrosine residue binding"/>
    <property type="evidence" value="ECO:0000318"/>
    <property type="project" value="GO_Central"/>
</dbReference>
<dbReference type="GO" id="GO:0043408">
    <property type="term" value="P:regulation of MAPK cascade"/>
    <property type="evidence" value="ECO:0000318"/>
    <property type="project" value="GO_Central"/>
</dbReference>
<dbReference type="GO" id="GO:0007165">
    <property type="term" value="P:signal transduction"/>
    <property type="evidence" value="ECO:0000318"/>
    <property type="project" value="GO_Central"/>
</dbReference>
<dbReference type="CDD" id="cd10344">
    <property type="entry name" value="SH2_SLAP"/>
    <property type="match status" value="1"/>
</dbReference>
<dbReference type="CDD" id="cd12010">
    <property type="entry name" value="SH3_SLAP"/>
    <property type="match status" value="1"/>
</dbReference>
<dbReference type="FunFam" id="2.30.30.40:FF:000134">
    <property type="entry name" value="src-like-adapter isoform X1"/>
    <property type="match status" value="1"/>
</dbReference>
<dbReference type="FunFam" id="3.30.505.10:FF:000039">
    <property type="entry name" value="src-like-adapter isoform X1"/>
    <property type="match status" value="1"/>
</dbReference>
<dbReference type="Gene3D" id="3.30.505.10">
    <property type="entry name" value="SH2 domain"/>
    <property type="match status" value="1"/>
</dbReference>
<dbReference type="Gene3D" id="2.30.30.40">
    <property type="entry name" value="SH3 Domains"/>
    <property type="match status" value="1"/>
</dbReference>
<dbReference type="InterPro" id="IPR043539">
    <property type="entry name" value="Grb2-like"/>
</dbReference>
<dbReference type="InterPro" id="IPR000980">
    <property type="entry name" value="SH2"/>
</dbReference>
<dbReference type="InterPro" id="IPR036860">
    <property type="entry name" value="SH2_dom_sf"/>
</dbReference>
<dbReference type="InterPro" id="IPR036028">
    <property type="entry name" value="SH3-like_dom_sf"/>
</dbReference>
<dbReference type="InterPro" id="IPR001452">
    <property type="entry name" value="SH3_domain"/>
</dbReference>
<dbReference type="InterPro" id="IPR035052">
    <property type="entry name" value="SLAP_SH2"/>
</dbReference>
<dbReference type="InterPro" id="IPR035596">
    <property type="entry name" value="SLAP_SH3"/>
</dbReference>
<dbReference type="PANTHER" id="PTHR46037">
    <property type="entry name" value="PROTEIN ENHANCER OF SEVENLESS 2B"/>
    <property type="match status" value="1"/>
</dbReference>
<dbReference type="Pfam" id="PF00017">
    <property type="entry name" value="SH2"/>
    <property type="match status" value="1"/>
</dbReference>
<dbReference type="Pfam" id="PF00018">
    <property type="entry name" value="SH3_1"/>
    <property type="match status" value="1"/>
</dbReference>
<dbReference type="PRINTS" id="PR00401">
    <property type="entry name" value="SH2DOMAIN"/>
</dbReference>
<dbReference type="SMART" id="SM00252">
    <property type="entry name" value="SH2"/>
    <property type="match status" value="1"/>
</dbReference>
<dbReference type="SMART" id="SM00326">
    <property type="entry name" value="SH3"/>
    <property type="match status" value="1"/>
</dbReference>
<dbReference type="SUPFAM" id="SSF55550">
    <property type="entry name" value="SH2 domain"/>
    <property type="match status" value="1"/>
</dbReference>
<dbReference type="SUPFAM" id="SSF50044">
    <property type="entry name" value="SH3-domain"/>
    <property type="match status" value="1"/>
</dbReference>
<dbReference type="PROSITE" id="PS50001">
    <property type="entry name" value="SH2"/>
    <property type="match status" value="1"/>
</dbReference>
<dbReference type="PROSITE" id="PS50002">
    <property type="entry name" value="SH3"/>
    <property type="match status" value="1"/>
</dbReference>
<gene>
    <name type="primary">Sla</name>
    <name type="synonym">Slap</name>
    <name type="synonym">Slap1</name>
</gene>